<feature type="chain" id="PRO_1000014125" description="Ion-translocating oxidoreductase complex subunit G">
    <location>
        <begin position="1"/>
        <end position="219"/>
    </location>
</feature>
<feature type="transmembrane region" description="Helical" evidence="1">
    <location>
        <begin position="25"/>
        <end position="45"/>
    </location>
</feature>
<feature type="modified residue" description="FMN phosphoryl threonine" evidence="1">
    <location>
        <position position="187"/>
    </location>
</feature>
<gene>
    <name evidence="1" type="primary">rnfG</name>
    <name type="ordered locus">Rsph17029_3935</name>
</gene>
<sequence length="219" mass="22790">MTDDTAAPPPRGPARDWKSSPLVSGLLLGLFSLVSALMLALASDATRGPIAARSAEDLLASLAQVLPAALHDNDPTADIRTLADADEGAVRVYVATRGGAVTAVTFELTGYGYGGAIRVLMAVAADGTILGARVLSHTETPGLGDKIEIGKDDWIEGFAGRSLTDPGPAGWKVRRDGGVFDQFSGATITPRAVVGTIHRGLTLFDRHRAELLAPLPLRS</sequence>
<protein>
    <recommendedName>
        <fullName evidence="1">Ion-translocating oxidoreductase complex subunit G</fullName>
        <ecNumber evidence="1">7.-.-.-</ecNumber>
    </recommendedName>
    <alternativeName>
        <fullName evidence="1">Rnf electron transport complex subunit G</fullName>
    </alternativeName>
</protein>
<proteinExistence type="inferred from homology"/>
<dbReference type="EC" id="7.-.-.-" evidence="1"/>
<dbReference type="EMBL" id="CP000578">
    <property type="protein sequence ID" value="ABN79013.1"/>
    <property type="molecule type" value="Genomic_DNA"/>
</dbReference>
<dbReference type="RefSeq" id="WP_011842755.1">
    <property type="nucleotide sequence ID" value="NC_009050.1"/>
</dbReference>
<dbReference type="SMR" id="A3PRP7"/>
<dbReference type="KEGG" id="rsh:Rsph17029_3935"/>
<dbReference type="HOGENOM" id="CLU_077882_1_0_5"/>
<dbReference type="GO" id="GO:0005886">
    <property type="term" value="C:plasma membrane"/>
    <property type="evidence" value="ECO:0007669"/>
    <property type="project" value="InterPro"/>
</dbReference>
<dbReference type="GO" id="GO:0042717">
    <property type="term" value="C:plasma membrane-derived chromatophore membrane"/>
    <property type="evidence" value="ECO:0007669"/>
    <property type="project" value="UniProtKB-SubCell"/>
</dbReference>
<dbReference type="GO" id="GO:0009055">
    <property type="term" value="F:electron transfer activity"/>
    <property type="evidence" value="ECO:0007669"/>
    <property type="project" value="InterPro"/>
</dbReference>
<dbReference type="GO" id="GO:0010181">
    <property type="term" value="F:FMN binding"/>
    <property type="evidence" value="ECO:0007669"/>
    <property type="project" value="InterPro"/>
</dbReference>
<dbReference type="GO" id="GO:0022900">
    <property type="term" value="P:electron transport chain"/>
    <property type="evidence" value="ECO:0007669"/>
    <property type="project" value="UniProtKB-UniRule"/>
</dbReference>
<dbReference type="GO" id="GO:0009399">
    <property type="term" value="P:nitrogen fixation"/>
    <property type="evidence" value="ECO:0007669"/>
    <property type="project" value="UniProtKB-UniRule"/>
</dbReference>
<dbReference type="HAMAP" id="MF_00479">
    <property type="entry name" value="RsxG_RnfG"/>
    <property type="match status" value="1"/>
</dbReference>
<dbReference type="InterPro" id="IPR007329">
    <property type="entry name" value="FMN-bd"/>
</dbReference>
<dbReference type="InterPro" id="IPR010209">
    <property type="entry name" value="Ion_transpt_RnfG/RsxG"/>
</dbReference>
<dbReference type="NCBIfam" id="NF002519">
    <property type="entry name" value="PRK01908.1"/>
    <property type="match status" value="1"/>
</dbReference>
<dbReference type="NCBIfam" id="TIGR01947">
    <property type="entry name" value="rnfG"/>
    <property type="match status" value="1"/>
</dbReference>
<dbReference type="PANTHER" id="PTHR36118">
    <property type="entry name" value="ION-TRANSLOCATING OXIDOREDUCTASE COMPLEX SUBUNIT G"/>
    <property type="match status" value="1"/>
</dbReference>
<dbReference type="PANTHER" id="PTHR36118:SF1">
    <property type="entry name" value="ION-TRANSLOCATING OXIDOREDUCTASE COMPLEX SUBUNIT G"/>
    <property type="match status" value="1"/>
</dbReference>
<dbReference type="Pfam" id="PF04205">
    <property type="entry name" value="FMN_bind"/>
    <property type="match status" value="1"/>
</dbReference>
<dbReference type="PIRSF" id="PIRSF006091">
    <property type="entry name" value="E_trnsport_RnfG"/>
    <property type="match status" value="1"/>
</dbReference>
<dbReference type="SMART" id="SM00900">
    <property type="entry name" value="FMN_bind"/>
    <property type="match status" value="1"/>
</dbReference>
<accession>A3PRP7</accession>
<keyword id="KW-0249">Electron transport</keyword>
<keyword id="KW-0285">Flavoprotein</keyword>
<keyword id="KW-0288">FMN</keyword>
<keyword id="KW-0472">Membrane</keyword>
<keyword id="KW-0535">Nitrogen fixation</keyword>
<keyword id="KW-0597">Phosphoprotein</keyword>
<keyword id="KW-1278">Translocase</keyword>
<keyword id="KW-0812">Transmembrane</keyword>
<keyword id="KW-1133">Transmembrane helix</keyword>
<keyword id="KW-0813">Transport</keyword>
<comment type="function">
    <text evidence="1">Part of a membrane-bound complex that couples electron transfer with translocation of ions across the membrane.</text>
</comment>
<comment type="cofactor">
    <cofactor evidence="1">
        <name>FMN</name>
        <dbReference type="ChEBI" id="CHEBI:58210"/>
    </cofactor>
</comment>
<comment type="subunit">
    <text evidence="1">The complex is composed of six subunits: RnfA, RnfB, RnfC, RnfD, RnfE and RnfG.</text>
</comment>
<comment type="subcellular location">
    <subcellularLocation>
        <location evidence="1">Cellular chromatophore membrane</location>
        <topology evidence="1">Single-pass membrane protein</topology>
    </subcellularLocation>
</comment>
<comment type="similarity">
    <text evidence="1">Belongs to the RnfG family.</text>
</comment>
<reference key="1">
    <citation type="submission" date="2007-02" db="EMBL/GenBank/DDBJ databases">
        <title>Complete sequence of chromosome 2 of Rhodobacter sphaeroides ATCC 17029.</title>
        <authorList>
            <person name="Copeland A."/>
            <person name="Lucas S."/>
            <person name="Lapidus A."/>
            <person name="Barry K."/>
            <person name="Detter J.C."/>
            <person name="Glavina del Rio T."/>
            <person name="Hammon N."/>
            <person name="Israni S."/>
            <person name="Dalin E."/>
            <person name="Tice H."/>
            <person name="Pitluck S."/>
            <person name="Kiss H."/>
            <person name="Brettin T."/>
            <person name="Bruce D."/>
            <person name="Han C."/>
            <person name="Tapia R."/>
            <person name="Gilna P."/>
            <person name="Schmutz J."/>
            <person name="Larimer F."/>
            <person name="Land M."/>
            <person name="Hauser L."/>
            <person name="Kyrpides N."/>
            <person name="Mikhailova N."/>
            <person name="Richardson P."/>
            <person name="Mackenzie C."/>
            <person name="Choudhary M."/>
            <person name="Donohue T.J."/>
            <person name="Kaplan S."/>
        </authorList>
    </citation>
    <scope>NUCLEOTIDE SEQUENCE [LARGE SCALE GENOMIC DNA]</scope>
    <source>
        <strain>ATCC 17029 / ATH 2.4.9</strain>
    </source>
</reference>
<organism>
    <name type="scientific">Cereibacter sphaeroides (strain ATCC 17029 / ATH 2.4.9)</name>
    <name type="common">Rhodobacter sphaeroides</name>
    <dbReference type="NCBI Taxonomy" id="349101"/>
    <lineage>
        <taxon>Bacteria</taxon>
        <taxon>Pseudomonadati</taxon>
        <taxon>Pseudomonadota</taxon>
        <taxon>Alphaproteobacteria</taxon>
        <taxon>Rhodobacterales</taxon>
        <taxon>Paracoccaceae</taxon>
        <taxon>Cereibacter</taxon>
    </lineage>
</organism>
<evidence type="ECO:0000255" key="1">
    <source>
        <dbReference type="HAMAP-Rule" id="MF_00479"/>
    </source>
</evidence>
<name>RNFG_CERS1</name>